<gene>
    <name evidence="1" type="primary">psbT</name>
</gene>
<dbReference type="EMBL" id="AF469710">
    <property type="protein sequence ID" value="AAQ18544.1"/>
    <property type="molecule type" value="Genomic_DNA"/>
</dbReference>
<dbReference type="RefSeq" id="YP_009154297.1">
    <property type="nucleotide sequence ID" value="NC_027423.1"/>
</dbReference>
<dbReference type="SMR" id="Q71L95"/>
<dbReference type="GeneID" id="24707166"/>
<dbReference type="GO" id="GO:0009535">
    <property type="term" value="C:chloroplast thylakoid membrane"/>
    <property type="evidence" value="ECO:0007669"/>
    <property type="project" value="UniProtKB-SubCell"/>
</dbReference>
<dbReference type="GO" id="GO:0009539">
    <property type="term" value="C:photosystem II reaction center"/>
    <property type="evidence" value="ECO:0007669"/>
    <property type="project" value="InterPro"/>
</dbReference>
<dbReference type="GO" id="GO:0015979">
    <property type="term" value="P:photosynthesis"/>
    <property type="evidence" value="ECO:0007669"/>
    <property type="project" value="UniProtKB-UniRule"/>
</dbReference>
<dbReference type="HAMAP" id="MF_00808">
    <property type="entry name" value="PSII_PsbT"/>
    <property type="match status" value="1"/>
</dbReference>
<dbReference type="InterPro" id="IPR001743">
    <property type="entry name" value="PSII_PsbT"/>
</dbReference>
<dbReference type="InterPro" id="IPR037268">
    <property type="entry name" value="PSII_PsbT_sf"/>
</dbReference>
<dbReference type="PANTHER" id="PTHR36411">
    <property type="match status" value="1"/>
</dbReference>
<dbReference type="PANTHER" id="PTHR36411:SF2">
    <property type="entry name" value="PHOTOSYSTEM II REACTION CENTER PROTEIN T"/>
    <property type="match status" value="1"/>
</dbReference>
<dbReference type="Pfam" id="PF01405">
    <property type="entry name" value="PsbT"/>
    <property type="match status" value="1"/>
</dbReference>
<dbReference type="SUPFAM" id="SSF161029">
    <property type="entry name" value="Photosystem II reaction center protein T, PsbT"/>
    <property type="match status" value="1"/>
</dbReference>
<sequence>MEALVYTFLLVSTLGIIFFAIFFREPPKLPDRGGK</sequence>
<evidence type="ECO:0000255" key="1">
    <source>
        <dbReference type="HAMAP-Rule" id="MF_00808"/>
    </source>
</evidence>
<feature type="chain" id="PRO_0000217953" description="Photosystem II reaction center protein T">
    <location>
        <begin position="1"/>
        <end position="35"/>
    </location>
</feature>
<feature type="transmembrane region" description="Helical" evidence="1">
    <location>
        <begin position="3"/>
        <end position="23"/>
    </location>
</feature>
<reference key="1">
    <citation type="journal article" date="2003" name="Mol. Phylogenet. Evol.">
        <title>Inference of higher-order relationships in the cycads from a large chloroplast data set.</title>
        <authorList>
            <person name="Rai H.S."/>
            <person name="O'Brien H.E."/>
            <person name="Reeves P.A."/>
            <person name="Olmstead R.G."/>
            <person name="Graham S.W."/>
        </authorList>
    </citation>
    <scope>NUCLEOTIDE SEQUENCE [GENOMIC DNA]</scope>
</reference>
<comment type="function">
    <text evidence="1">Found at the monomer-monomer interface of the photosystem II (PS II) dimer, plays a role in assembly and dimerization of PSII. PSII is a light-driven water plastoquinone oxidoreductase, using light energy to abstract electrons from H(2)O, generating a proton gradient subsequently used for ATP formation.</text>
</comment>
<comment type="subunit">
    <text evidence="1">PSII is composed of 1 copy each of membrane proteins PsbA, PsbB, PsbC, PsbD, PsbE, PsbF, PsbH, PsbI, PsbJ, PsbK, PsbL, PsbM, PsbT, PsbY, PsbZ, Psb30/Ycf12, at least 3 peripheral proteins of the oxygen-evolving complex and a large number of cofactors. It forms dimeric complexes.</text>
</comment>
<comment type="subcellular location">
    <subcellularLocation>
        <location evidence="1">Plastid</location>
        <location evidence="1">Chloroplast thylakoid membrane</location>
        <topology evidence="1">Single-pass membrane protein</topology>
    </subcellularLocation>
</comment>
<comment type="similarity">
    <text evidence="1">Belongs to the PsbT family.</text>
</comment>
<protein>
    <recommendedName>
        <fullName evidence="1">Photosystem II reaction center protein T</fullName>
        <shortName evidence="1">PSII-T</shortName>
    </recommendedName>
</protein>
<geneLocation type="chloroplast"/>
<keyword id="KW-0150">Chloroplast</keyword>
<keyword id="KW-0472">Membrane</keyword>
<keyword id="KW-0602">Photosynthesis</keyword>
<keyword id="KW-0604">Photosystem II</keyword>
<keyword id="KW-0934">Plastid</keyword>
<keyword id="KW-0793">Thylakoid</keyword>
<keyword id="KW-0812">Transmembrane</keyword>
<keyword id="KW-1133">Transmembrane helix</keyword>
<organism>
    <name type="scientific">Metasequoia glyptostroboides</name>
    <name type="common">Dawn redwood</name>
    <name type="synonym">Sequoia glyptostroboides</name>
    <dbReference type="NCBI Taxonomy" id="3371"/>
    <lineage>
        <taxon>Eukaryota</taxon>
        <taxon>Viridiplantae</taxon>
        <taxon>Streptophyta</taxon>
        <taxon>Embryophyta</taxon>
        <taxon>Tracheophyta</taxon>
        <taxon>Spermatophyta</taxon>
        <taxon>Pinopsida</taxon>
        <taxon>Pinidae</taxon>
        <taxon>Conifers II</taxon>
        <taxon>Cupressales</taxon>
        <taxon>Cupressaceae</taxon>
        <taxon>Metasequoia</taxon>
    </lineage>
</organism>
<proteinExistence type="inferred from homology"/>
<name>PSBT_METGY</name>
<accession>Q71L95</accession>